<sequence>MTLNLCVLTPNRIIWDSEVKEIILPTNSGQIGVLPNHAPIATAVDIGILRIRLDDQWVTMALMGGFARIGNNEITILVNDAERGSDIDLQEAQGTLEIAEANLNKAEGKRQVIEANLALRRARTRVEAVNTIS</sequence>
<comment type="function">
    <text evidence="1">Produces ATP from ADP in the presence of a proton gradient across the membrane.</text>
</comment>
<comment type="subunit">
    <text evidence="1">F-type ATPases have 2 components, CF(1) - the catalytic core - and CF(0) - the membrane proton channel. CF(1) has five subunits: alpha(3), beta(3), gamma(1), delta(1), epsilon(1). CF(0) has three main subunits: a, b and c.</text>
</comment>
<comment type="subcellular location">
    <subcellularLocation>
        <location evidence="1">Plastid</location>
        <location evidence="1">Chloroplast thylakoid membrane</location>
        <topology evidence="1">Peripheral membrane protein</topology>
    </subcellularLocation>
</comment>
<comment type="similarity">
    <text evidence="1">Belongs to the ATPase epsilon chain family.</text>
</comment>
<gene>
    <name evidence="1" type="primary">atpE</name>
</gene>
<organism>
    <name type="scientific">Piper cenocladum</name>
    <name type="common">Ant piper</name>
    <dbReference type="NCBI Taxonomy" id="398741"/>
    <lineage>
        <taxon>Eukaryota</taxon>
        <taxon>Viridiplantae</taxon>
        <taxon>Streptophyta</taxon>
        <taxon>Embryophyta</taxon>
        <taxon>Tracheophyta</taxon>
        <taxon>Spermatophyta</taxon>
        <taxon>Magnoliopsida</taxon>
        <taxon>Magnoliidae</taxon>
        <taxon>Piperales</taxon>
        <taxon>Piperaceae</taxon>
        <taxon>Piper</taxon>
    </lineage>
</organism>
<keyword id="KW-0066">ATP synthesis</keyword>
<keyword id="KW-0139">CF(1)</keyword>
<keyword id="KW-0150">Chloroplast</keyword>
<keyword id="KW-0375">Hydrogen ion transport</keyword>
<keyword id="KW-0406">Ion transport</keyword>
<keyword id="KW-0472">Membrane</keyword>
<keyword id="KW-0934">Plastid</keyword>
<keyword id="KW-0793">Thylakoid</keyword>
<keyword id="KW-0813">Transport</keyword>
<accession>Q06GQ4</accession>
<geneLocation type="chloroplast"/>
<reference key="1">
    <citation type="journal article" date="2006" name="BMC Evol. Biol.">
        <title>Complete plastid genome sequences of Drimys, Liriodendron, and Piper: implications for the phylogenetic relationships of magnoliids.</title>
        <authorList>
            <person name="Cai Z."/>
            <person name="Penaflor C."/>
            <person name="Kuehl J.V."/>
            <person name="Leebens-Mack J."/>
            <person name="Carlson J.E."/>
            <person name="dePamphilis C.W."/>
            <person name="Boore J.L."/>
            <person name="Jansen R.K."/>
        </authorList>
    </citation>
    <scope>NUCLEOTIDE SEQUENCE [LARGE SCALE GENOMIC DNA]</scope>
</reference>
<feature type="chain" id="PRO_0000275213" description="ATP synthase epsilon chain, chloroplastic">
    <location>
        <begin position="1"/>
        <end position="133"/>
    </location>
</feature>
<dbReference type="EMBL" id="DQ887677">
    <property type="protein sequence ID" value="ABI14478.1"/>
    <property type="molecule type" value="Genomic_DNA"/>
</dbReference>
<dbReference type="RefSeq" id="YP_784479.1">
    <property type="nucleotide sequence ID" value="NC_008457.1"/>
</dbReference>
<dbReference type="SMR" id="Q06GQ4"/>
<dbReference type="GeneID" id="4363662"/>
<dbReference type="GO" id="GO:0009535">
    <property type="term" value="C:chloroplast thylakoid membrane"/>
    <property type="evidence" value="ECO:0007669"/>
    <property type="project" value="UniProtKB-SubCell"/>
</dbReference>
<dbReference type="GO" id="GO:0045259">
    <property type="term" value="C:proton-transporting ATP synthase complex"/>
    <property type="evidence" value="ECO:0007669"/>
    <property type="project" value="UniProtKB-KW"/>
</dbReference>
<dbReference type="GO" id="GO:0005524">
    <property type="term" value="F:ATP binding"/>
    <property type="evidence" value="ECO:0007669"/>
    <property type="project" value="UniProtKB-UniRule"/>
</dbReference>
<dbReference type="GO" id="GO:0046933">
    <property type="term" value="F:proton-transporting ATP synthase activity, rotational mechanism"/>
    <property type="evidence" value="ECO:0007669"/>
    <property type="project" value="UniProtKB-UniRule"/>
</dbReference>
<dbReference type="CDD" id="cd12152">
    <property type="entry name" value="F1-ATPase_delta"/>
    <property type="match status" value="1"/>
</dbReference>
<dbReference type="FunFam" id="2.60.15.10:FF:000002">
    <property type="entry name" value="ATP synthase epsilon chain, chloroplastic"/>
    <property type="match status" value="1"/>
</dbReference>
<dbReference type="Gene3D" id="6.10.140.480">
    <property type="match status" value="1"/>
</dbReference>
<dbReference type="Gene3D" id="2.60.15.10">
    <property type="entry name" value="F0F1 ATP synthase delta/epsilon subunit, N-terminal"/>
    <property type="match status" value="1"/>
</dbReference>
<dbReference type="HAMAP" id="MF_00530">
    <property type="entry name" value="ATP_synth_epsil_bac"/>
    <property type="match status" value="1"/>
</dbReference>
<dbReference type="InterPro" id="IPR001469">
    <property type="entry name" value="ATP_synth_F1_dsu/esu"/>
</dbReference>
<dbReference type="InterPro" id="IPR020546">
    <property type="entry name" value="ATP_synth_F1_dsu/esu_N"/>
</dbReference>
<dbReference type="InterPro" id="IPR020547">
    <property type="entry name" value="ATP_synth_F1_esu_C"/>
</dbReference>
<dbReference type="InterPro" id="IPR036771">
    <property type="entry name" value="ATPsynth_dsu/esu_N"/>
</dbReference>
<dbReference type="NCBIfam" id="TIGR01216">
    <property type="entry name" value="ATP_synt_epsi"/>
    <property type="match status" value="1"/>
</dbReference>
<dbReference type="PANTHER" id="PTHR13822">
    <property type="entry name" value="ATP SYNTHASE DELTA/EPSILON CHAIN"/>
    <property type="match status" value="1"/>
</dbReference>
<dbReference type="PANTHER" id="PTHR13822:SF10">
    <property type="entry name" value="ATP SYNTHASE EPSILON CHAIN, CHLOROPLASTIC"/>
    <property type="match status" value="1"/>
</dbReference>
<dbReference type="Pfam" id="PF00401">
    <property type="entry name" value="ATP-synt_DE"/>
    <property type="match status" value="1"/>
</dbReference>
<dbReference type="Pfam" id="PF02823">
    <property type="entry name" value="ATP-synt_DE_N"/>
    <property type="match status" value="1"/>
</dbReference>
<dbReference type="SUPFAM" id="SSF51344">
    <property type="entry name" value="Epsilon subunit of F1F0-ATP synthase N-terminal domain"/>
    <property type="match status" value="1"/>
</dbReference>
<evidence type="ECO:0000255" key="1">
    <source>
        <dbReference type="HAMAP-Rule" id="MF_00530"/>
    </source>
</evidence>
<protein>
    <recommendedName>
        <fullName evidence="1">ATP synthase epsilon chain, chloroplastic</fullName>
    </recommendedName>
    <alternativeName>
        <fullName evidence="1">ATP synthase F1 sector epsilon subunit</fullName>
    </alternativeName>
    <alternativeName>
        <fullName evidence="1">F-ATPase epsilon subunit</fullName>
    </alternativeName>
</protein>
<proteinExistence type="inferred from homology"/>
<name>ATPE_PIPCE</name>